<reference key="1">
    <citation type="submission" date="2008-05" db="EMBL/GenBank/DDBJ databases">
        <title>Complete sequence of chromosome of Geobacter lovleyi SZ.</title>
        <authorList>
            <consortium name="US DOE Joint Genome Institute"/>
            <person name="Lucas S."/>
            <person name="Copeland A."/>
            <person name="Lapidus A."/>
            <person name="Glavina del Rio T."/>
            <person name="Dalin E."/>
            <person name="Tice H."/>
            <person name="Bruce D."/>
            <person name="Goodwin L."/>
            <person name="Pitluck S."/>
            <person name="Chertkov O."/>
            <person name="Meincke L."/>
            <person name="Brettin T."/>
            <person name="Detter J.C."/>
            <person name="Han C."/>
            <person name="Tapia R."/>
            <person name="Kuske C.R."/>
            <person name="Schmutz J."/>
            <person name="Larimer F."/>
            <person name="Land M."/>
            <person name="Hauser L."/>
            <person name="Kyrpides N."/>
            <person name="Mikhailova N."/>
            <person name="Sung Y."/>
            <person name="Fletcher K.E."/>
            <person name="Ritalahti K.M."/>
            <person name="Loeffler F.E."/>
            <person name="Richardson P."/>
        </authorList>
    </citation>
    <scope>NUCLEOTIDE SEQUENCE [LARGE SCALE GENOMIC DNA]</scope>
    <source>
        <strain>ATCC BAA-1151 / DSM 17278 / SZ</strain>
    </source>
</reference>
<protein>
    <recommendedName>
        <fullName evidence="1">Acyl-[acyl-carrier-protein]--UDP-N-acetylglucosamine O-acyltransferase</fullName>
        <shortName evidence="1">UDP-N-acetylglucosamine acyltransferase</shortName>
        <ecNumber evidence="1">2.3.1.129</ecNumber>
    </recommendedName>
</protein>
<proteinExistence type="inferred from homology"/>
<sequence>MSIHASAIVHPSAQLAEGVEVGPYAIIEEHAIIGKGTSIGAHAVIGKWTELGENNQIYHMASVGAAPQDLKYKGEECWTRLGNGNVIREFATIHRGTVTGHAETVMGNNNLMMAYSHVAHDCTVGNGVVMANAATLAGHVTVQDNVILGGLVAIHQFVTIGAYAMLGGGTLVGMDIPPYMIATSGGKREAQLRGLNLIGLKRRGFSDEAISGLKKAYKTLFMAHLKQADAIAKIRSEIVGCAEVDTLLAFIEASQRGICRG</sequence>
<organism>
    <name type="scientific">Trichlorobacter lovleyi (strain ATCC BAA-1151 / DSM 17278 / SZ)</name>
    <name type="common">Geobacter lovleyi</name>
    <dbReference type="NCBI Taxonomy" id="398767"/>
    <lineage>
        <taxon>Bacteria</taxon>
        <taxon>Pseudomonadati</taxon>
        <taxon>Thermodesulfobacteriota</taxon>
        <taxon>Desulfuromonadia</taxon>
        <taxon>Geobacterales</taxon>
        <taxon>Geobacteraceae</taxon>
        <taxon>Trichlorobacter</taxon>
    </lineage>
</organism>
<gene>
    <name evidence="1" type="primary">lpxA</name>
    <name type="ordered locus">Glov_0764</name>
</gene>
<feature type="chain" id="PRO_1000205794" description="Acyl-[acyl-carrier-protein]--UDP-N-acetylglucosamine O-acyltransferase">
    <location>
        <begin position="1"/>
        <end position="261"/>
    </location>
</feature>
<accession>B3E4H5</accession>
<evidence type="ECO:0000255" key="1">
    <source>
        <dbReference type="HAMAP-Rule" id="MF_00387"/>
    </source>
</evidence>
<comment type="function">
    <text evidence="1">Involved in the biosynthesis of lipid A, a phosphorylated glycolipid that anchors the lipopolysaccharide to the outer membrane of the cell.</text>
</comment>
<comment type="catalytic activity">
    <reaction evidence="1">
        <text>a (3R)-hydroxyacyl-[ACP] + UDP-N-acetyl-alpha-D-glucosamine = a UDP-3-O-[(3R)-3-hydroxyacyl]-N-acetyl-alpha-D-glucosamine + holo-[ACP]</text>
        <dbReference type="Rhea" id="RHEA:67812"/>
        <dbReference type="Rhea" id="RHEA-COMP:9685"/>
        <dbReference type="Rhea" id="RHEA-COMP:9945"/>
        <dbReference type="ChEBI" id="CHEBI:57705"/>
        <dbReference type="ChEBI" id="CHEBI:64479"/>
        <dbReference type="ChEBI" id="CHEBI:78827"/>
        <dbReference type="ChEBI" id="CHEBI:173225"/>
        <dbReference type="EC" id="2.3.1.129"/>
    </reaction>
</comment>
<comment type="pathway">
    <text evidence="1">Glycolipid biosynthesis; lipid IV(A) biosynthesis; lipid IV(A) from (3R)-3-hydroxytetradecanoyl-[acyl-carrier-protein] and UDP-N-acetyl-alpha-D-glucosamine: step 1/6.</text>
</comment>
<comment type="subunit">
    <text evidence="1">Homotrimer.</text>
</comment>
<comment type="subcellular location">
    <subcellularLocation>
        <location evidence="1">Cytoplasm</location>
    </subcellularLocation>
</comment>
<comment type="similarity">
    <text evidence="1">Belongs to the transferase hexapeptide repeat family. LpxA subfamily.</text>
</comment>
<dbReference type="EC" id="2.3.1.129" evidence="1"/>
<dbReference type="EMBL" id="CP001089">
    <property type="protein sequence ID" value="ACD94490.1"/>
    <property type="molecule type" value="Genomic_DNA"/>
</dbReference>
<dbReference type="RefSeq" id="WP_012468846.1">
    <property type="nucleotide sequence ID" value="NC_010814.1"/>
</dbReference>
<dbReference type="SMR" id="B3E4H5"/>
<dbReference type="STRING" id="398767.Glov_0764"/>
<dbReference type="KEGG" id="glo:Glov_0764"/>
<dbReference type="eggNOG" id="COG1043">
    <property type="taxonomic scope" value="Bacteria"/>
</dbReference>
<dbReference type="HOGENOM" id="CLU_061249_0_0_7"/>
<dbReference type="OrthoDB" id="9807278at2"/>
<dbReference type="UniPathway" id="UPA00359">
    <property type="reaction ID" value="UER00477"/>
</dbReference>
<dbReference type="Proteomes" id="UP000002420">
    <property type="component" value="Chromosome"/>
</dbReference>
<dbReference type="GO" id="GO:0005737">
    <property type="term" value="C:cytoplasm"/>
    <property type="evidence" value="ECO:0007669"/>
    <property type="project" value="UniProtKB-SubCell"/>
</dbReference>
<dbReference type="GO" id="GO:0016020">
    <property type="term" value="C:membrane"/>
    <property type="evidence" value="ECO:0007669"/>
    <property type="project" value="GOC"/>
</dbReference>
<dbReference type="GO" id="GO:0008780">
    <property type="term" value="F:acyl-[acyl-carrier-protein]-UDP-N-acetylglucosamine O-acyltransferase activity"/>
    <property type="evidence" value="ECO:0007669"/>
    <property type="project" value="UniProtKB-UniRule"/>
</dbReference>
<dbReference type="GO" id="GO:0009245">
    <property type="term" value="P:lipid A biosynthetic process"/>
    <property type="evidence" value="ECO:0007669"/>
    <property type="project" value="UniProtKB-UniRule"/>
</dbReference>
<dbReference type="CDD" id="cd03351">
    <property type="entry name" value="LbH_UDP-GlcNAc_AT"/>
    <property type="match status" value="1"/>
</dbReference>
<dbReference type="Gene3D" id="2.160.10.10">
    <property type="entry name" value="Hexapeptide repeat proteins"/>
    <property type="match status" value="1"/>
</dbReference>
<dbReference type="Gene3D" id="1.20.1180.10">
    <property type="entry name" value="Udp N-acetylglucosamine O-acyltransferase, C-terminal domain"/>
    <property type="match status" value="1"/>
</dbReference>
<dbReference type="HAMAP" id="MF_00387">
    <property type="entry name" value="LpxA"/>
    <property type="match status" value="1"/>
</dbReference>
<dbReference type="InterPro" id="IPR029098">
    <property type="entry name" value="Acetyltransf_C"/>
</dbReference>
<dbReference type="InterPro" id="IPR037157">
    <property type="entry name" value="Acetyltransf_C_sf"/>
</dbReference>
<dbReference type="InterPro" id="IPR018357">
    <property type="entry name" value="Hexapep_transf_CS"/>
</dbReference>
<dbReference type="InterPro" id="IPR010137">
    <property type="entry name" value="Lipid_A_LpxA"/>
</dbReference>
<dbReference type="InterPro" id="IPR011004">
    <property type="entry name" value="Trimer_LpxA-like_sf"/>
</dbReference>
<dbReference type="NCBIfam" id="TIGR01852">
    <property type="entry name" value="lipid_A_lpxA"/>
    <property type="match status" value="1"/>
</dbReference>
<dbReference type="NCBIfam" id="NF003657">
    <property type="entry name" value="PRK05289.1"/>
    <property type="match status" value="1"/>
</dbReference>
<dbReference type="PANTHER" id="PTHR43480">
    <property type="entry name" value="ACYL-[ACYL-CARRIER-PROTEIN]--UDP-N-ACETYLGLUCOSAMINE O-ACYLTRANSFERASE"/>
    <property type="match status" value="1"/>
</dbReference>
<dbReference type="PANTHER" id="PTHR43480:SF1">
    <property type="entry name" value="ACYL-[ACYL-CARRIER-PROTEIN]--UDP-N-ACETYLGLUCOSAMINE O-ACYLTRANSFERASE, MITOCHONDRIAL-RELATED"/>
    <property type="match status" value="1"/>
</dbReference>
<dbReference type="Pfam" id="PF13720">
    <property type="entry name" value="Acetyltransf_11"/>
    <property type="match status" value="1"/>
</dbReference>
<dbReference type="PIRSF" id="PIRSF000456">
    <property type="entry name" value="UDP-GlcNAc_acltr"/>
    <property type="match status" value="1"/>
</dbReference>
<dbReference type="SUPFAM" id="SSF51161">
    <property type="entry name" value="Trimeric LpxA-like enzymes"/>
    <property type="match status" value="1"/>
</dbReference>
<dbReference type="PROSITE" id="PS00101">
    <property type="entry name" value="HEXAPEP_TRANSFERASES"/>
    <property type="match status" value="1"/>
</dbReference>
<keyword id="KW-0012">Acyltransferase</keyword>
<keyword id="KW-0963">Cytoplasm</keyword>
<keyword id="KW-0441">Lipid A biosynthesis</keyword>
<keyword id="KW-0444">Lipid biosynthesis</keyword>
<keyword id="KW-0443">Lipid metabolism</keyword>
<keyword id="KW-1185">Reference proteome</keyword>
<keyword id="KW-0677">Repeat</keyword>
<keyword id="KW-0808">Transferase</keyword>
<name>LPXA_TRIL1</name>